<dbReference type="EC" id="1.-.-.-" evidence="8"/>
<dbReference type="EMBL" id="CM003162">
    <property type="protein sequence ID" value="KIS65762.1"/>
    <property type="molecule type" value="Genomic_DNA"/>
</dbReference>
<dbReference type="RefSeq" id="XP_011392733.1">
    <property type="nucleotide sequence ID" value="XM_011394431.1"/>
</dbReference>
<dbReference type="SMR" id="A0A0D1BUI1"/>
<dbReference type="STRING" id="237631.A0A0D1BUI1"/>
<dbReference type="EnsemblFungi" id="KIS65762">
    <property type="protein sequence ID" value="KIS65762"/>
    <property type="gene ID" value="UMAG_06466"/>
</dbReference>
<dbReference type="GeneID" id="23566047"/>
<dbReference type="KEGG" id="uma:UMAG_06466"/>
<dbReference type="VEuPathDB" id="FungiDB:UMAG_06466"/>
<dbReference type="eggNOG" id="KOG1502">
    <property type="taxonomic scope" value="Eukaryota"/>
</dbReference>
<dbReference type="InParanoid" id="A0A0D1BUI1"/>
<dbReference type="OrthoDB" id="2735536at2759"/>
<dbReference type="Proteomes" id="UP000000561">
    <property type="component" value="Chromosome 23"/>
</dbReference>
<dbReference type="GO" id="GO:0000166">
    <property type="term" value="F:nucleotide binding"/>
    <property type="evidence" value="ECO:0007669"/>
    <property type="project" value="UniProtKB-KW"/>
</dbReference>
<dbReference type="GO" id="GO:0016616">
    <property type="term" value="F:oxidoreductase activity, acting on the CH-OH group of donors, NAD or NADP as acceptor"/>
    <property type="evidence" value="ECO:0000318"/>
    <property type="project" value="GO_Central"/>
</dbReference>
<dbReference type="FunFam" id="3.40.50.720:FF:000644">
    <property type="entry name" value="NAD dependent epimerase/dehydratase family, putative"/>
    <property type="match status" value="1"/>
</dbReference>
<dbReference type="Gene3D" id="3.40.50.720">
    <property type="entry name" value="NAD(P)-binding Rossmann-like Domain"/>
    <property type="match status" value="1"/>
</dbReference>
<dbReference type="InterPro" id="IPR001509">
    <property type="entry name" value="Epimerase_deHydtase"/>
</dbReference>
<dbReference type="InterPro" id="IPR036291">
    <property type="entry name" value="NAD(P)-bd_dom_sf"/>
</dbReference>
<dbReference type="InterPro" id="IPR050425">
    <property type="entry name" value="NAD(P)_dehydrat-like"/>
</dbReference>
<dbReference type="PANTHER" id="PTHR10366">
    <property type="entry name" value="NAD DEPENDENT EPIMERASE/DEHYDRATASE"/>
    <property type="match status" value="1"/>
</dbReference>
<dbReference type="PANTHER" id="PTHR10366:SF564">
    <property type="entry name" value="STEROL-4-ALPHA-CARBOXYLATE 3-DEHYDROGENASE, DECARBOXYLATING"/>
    <property type="match status" value="1"/>
</dbReference>
<dbReference type="Pfam" id="PF01370">
    <property type="entry name" value="Epimerase"/>
    <property type="match status" value="1"/>
</dbReference>
<dbReference type="SUPFAM" id="SSF51735">
    <property type="entry name" value="NAD(P)-binding Rossmann-fold domains"/>
    <property type="match status" value="1"/>
</dbReference>
<sequence>MAGTSRNVRVLVTGANGFVGSHIVSLLLSRGYVVNATVRRQTASEKLIATFACDRLHVFVIPDLTSEQALDEAIRGCKYVVHVASTVPSKEQASGIDIDSAISSIESVMNSAVAHASEKVVLTSSMSTHLDVKAPILNESTWYTPDRSSTKLMVQYMSSKTLVERRAWELSSTLKLPLTTVAPVYIGGPTIIHEQDPKSSVSNQDLLRCIEDESRSRIPGWIDVRTVAHLHLHAIEDHSLNGRRILACTHNRGVVPMDCSLMNSLLAKDSAALIDFDRTKRDLLEQIDAFNSGQTRRVVA</sequence>
<proteinExistence type="evidence at transcript level"/>
<feature type="chain" id="PRO_0000452762" description="Fatty acid hydroxylase uhd1">
    <location>
        <begin position="1"/>
        <end position="300"/>
    </location>
</feature>
<feature type="active site" description="Proton donor" evidence="2">
    <location>
        <position position="160"/>
    </location>
</feature>
<feature type="binding site" evidence="1">
    <location>
        <begin position="14"/>
        <end position="20"/>
    </location>
    <ligand>
        <name>NADP(+)</name>
        <dbReference type="ChEBI" id="CHEBI:58349"/>
    </ligand>
</feature>
<feature type="binding site" evidence="1">
    <location>
        <position position="39"/>
    </location>
    <ligand>
        <name>NADP(+)</name>
        <dbReference type="ChEBI" id="CHEBI:58349"/>
    </ligand>
</feature>
<feature type="binding site" evidence="1">
    <location>
        <begin position="63"/>
        <end position="64"/>
    </location>
    <ligand>
        <name>NADP(+)</name>
        <dbReference type="ChEBI" id="CHEBI:58349"/>
    </ligand>
</feature>
<feature type="binding site" evidence="1">
    <location>
        <begin position="83"/>
        <end position="85"/>
    </location>
    <ligand>
        <name>NADP(+)</name>
        <dbReference type="ChEBI" id="CHEBI:58349"/>
    </ligand>
</feature>
<feature type="binding site" evidence="1">
    <location>
        <position position="156"/>
    </location>
    <ligand>
        <name>NADP(+)</name>
        <dbReference type="ChEBI" id="CHEBI:58349"/>
    </ligand>
</feature>
<feature type="binding site" evidence="1">
    <location>
        <position position="160"/>
    </location>
    <ligand>
        <name>NADP(+)</name>
        <dbReference type="ChEBI" id="CHEBI:58349"/>
    </ligand>
</feature>
<feature type="binding site" evidence="1">
    <location>
        <begin position="183"/>
        <end position="186"/>
    </location>
    <ligand>
        <name>NADP(+)</name>
        <dbReference type="ChEBI" id="CHEBI:58349"/>
    </ligand>
</feature>
<feature type="binding site" evidence="1">
    <location>
        <position position="199"/>
    </location>
    <ligand>
        <name>NADP(+)</name>
        <dbReference type="ChEBI" id="CHEBI:58349"/>
    </ligand>
</feature>
<comment type="function">
    <text evidence="3 4 8">Fatty acid hydroxylase; part of the gene cluster that mediates the biosynthesis of the glycolipid biosurfactant ustilagic acid (UA) (PubMed:15932999, PubMed:17850255). UA is a secreted cellobiose glycolipid that is toxic for many microorganisms and confers biocontrol activity to U.maydis (PubMed:15932999, PubMed:17850255). UA consists of 15,16-dihydroxypalmitic or 2,15,16-trihydroxypalmitic acid, which is O-glycosidically linked to cellobiose at its terminal hydroxyl group (PubMed:17850255). In addition, the cellobiose moiety is acetylated and acylated with a short-chain hydroxy fatty acid (PubMed:17850255). UA biosynthesis starts with omega-hydroxylation of palmitic acid catalyzed by the cytochrome P450 monooxygenase cyp1 (PubMed:17850255). Terminal hydroxylation of palmitic acid precedes subterminal hydroxylation catalyzed by the cytochrome P450 monooxygenase cyp2 (PubMed:17850255). Sequential glucosylation of the hydroxy fatty acid is probably catalyzed by the glycosyltransferase ugt1 (Probable). The cellobiose lipid is further decorated by acetylation of the proximal glucose residue and by acylation with a short-chain beta-hydroxy fatty acid at the distal glucose residue (Probable). The acyltransferase uat1 may be a good candidate for catalyzing either acetylation or acylation of the cellobiose lipid (Probable). The fatty acid synthase fas2 may be involved in synthesis of the carbon backbone of the short-chain beta-hydroxy fatty acid esterified to the cellobiose disaccharide (Probable). The secreted UA consists of a mixture of both alpha-hydroxylated and non-hydroxylated glycolipids; therefore, alpha-hydroxylation of the long-chain fatty, catalyzed by the fatty acid hydroxylase ahd1, occurs late in UA biosynthesis and may be the last step before secretion (PubMed:17850255).</text>
</comment>
<comment type="pathway">
    <text evidence="8">Secondary metabolite biosynthesis.</text>
</comment>
<comment type="induction">
    <text evidence="4 5">Expression is strongly induced under conditions of nitrogen starvation (PubMed:17850255). Expression is positively regulated by the cluster-specific transcription factor rua1 that recognizes and binds to the specific 5'-T/G-G/T-C-G-C-A-T-A/T-C/T-C/T-G/A-3' upstream activating sequence found in all promoters of the UA biosynthesis genes (PubMed:20173069).</text>
</comment>
<comment type="similarity">
    <text evidence="7">Belongs to the NAD(P)-dependent epimerase/dehydratase family. Dihydroflavonol-4-reductase subfamily.</text>
</comment>
<evidence type="ECO:0000250" key="1">
    <source>
        <dbReference type="UniProtKB" id="A0A059TC02"/>
    </source>
</evidence>
<evidence type="ECO:0000250" key="2">
    <source>
        <dbReference type="UniProtKB" id="Q12068"/>
    </source>
</evidence>
<evidence type="ECO:0000269" key="3">
    <source>
    </source>
</evidence>
<evidence type="ECO:0000269" key="4">
    <source>
    </source>
</evidence>
<evidence type="ECO:0000269" key="5">
    <source>
    </source>
</evidence>
<evidence type="ECO:0000303" key="6">
    <source>
    </source>
</evidence>
<evidence type="ECO:0000305" key="7"/>
<evidence type="ECO:0000305" key="8">
    <source>
    </source>
</evidence>
<gene>
    <name evidence="6" type="primary">uhd1</name>
    <name type="ORF">UMAG_06466</name>
</gene>
<protein>
    <recommendedName>
        <fullName evidence="6">Fatty acid hydroxylase uhd1</fullName>
        <ecNumber evidence="8">1.-.-.-</ecNumber>
    </recommendedName>
    <alternativeName>
        <fullName evidence="6">Ustilagic acid biosynthesis cluster protein uhd1</fullName>
    </alternativeName>
</protein>
<accession>A0A0D1BUI1</accession>
<reference key="1">
    <citation type="journal article" date="2006" name="Nature">
        <title>Insights from the genome of the biotrophic fungal plant pathogen Ustilago maydis.</title>
        <authorList>
            <person name="Kaemper J."/>
            <person name="Kahmann R."/>
            <person name="Boelker M."/>
            <person name="Ma L.-J."/>
            <person name="Brefort T."/>
            <person name="Saville B.J."/>
            <person name="Banuett F."/>
            <person name="Kronstad J.W."/>
            <person name="Gold S.E."/>
            <person name="Mueller O."/>
            <person name="Perlin M.H."/>
            <person name="Woesten H.A.B."/>
            <person name="de Vries R."/>
            <person name="Ruiz-Herrera J."/>
            <person name="Reynaga-Pena C.G."/>
            <person name="Snetselaar K."/>
            <person name="McCann M."/>
            <person name="Perez-Martin J."/>
            <person name="Feldbruegge M."/>
            <person name="Basse C.W."/>
            <person name="Steinberg G."/>
            <person name="Ibeas J.I."/>
            <person name="Holloman W."/>
            <person name="Guzman P."/>
            <person name="Farman M.L."/>
            <person name="Stajich J.E."/>
            <person name="Sentandreu R."/>
            <person name="Gonzalez-Prieto J.M."/>
            <person name="Kennell J.C."/>
            <person name="Molina L."/>
            <person name="Schirawski J."/>
            <person name="Mendoza-Mendoza A."/>
            <person name="Greilinger D."/>
            <person name="Muench K."/>
            <person name="Roessel N."/>
            <person name="Scherer M."/>
            <person name="Vranes M."/>
            <person name="Ladendorf O."/>
            <person name="Vincon V."/>
            <person name="Fuchs U."/>
            <person name="Sandrock B."/>
            <person name="Meng S."/>
            <person name="Ho E.C.H."/>
            <person name="Cahill M.J."/>
            <person name="Boyce K.J."/>
            <person name="Klose J."/>
            <person name="Klosterman S.J."/>
            <person name="Deelstra H.J."/>
            <person name="Ortiz-Castellanos L."/>
            <person name="Li W."/>
            <person name="Sanchez-Alonso P."/>
            <person name="Schreier P.H."/>
            <person name="Haeuser-Hahn I."/>
            <person name="Vaupel M."/>
            <person name="Koopmann E."/>
            <person name="Friedrich G."/>
            <person name="Voss H."/>
            <person name="Schlueter T."/>
            <person name="Margolis J."/>
            <person name="Platt D."/>
            <person name="Swimmer C."/>
            <person name="Gnirke A."/>
            <person name="Chen F."/>
            <person name="Vysotskaia V."/>
            <person name="Mannhaupt G."/>
            <person name="Gueldener U."/>
            <person name="Muensterkoetter M."/>
            <person name="Haase D."/>
            <person name="Oesterheld M."/>
            <person name="Mewes H.-W."/>
            <person name="Mauceli E.W."/>
            <person name="DeCaprio D."/>
            <person name="Wade C.M."/>
            <person name="Butler J."/>
            <person name="Young S.K."/>
            <person name="Jaffe D.B."/>
            <person name="Calvo S.E."/>
            <person name="Nusbaum C."/>
            <person name="Galagan J.E."/>
            <person name="Birren B.W."/>
        </authorList>
    </citation>
    <scope>NUCLEOTIDE SEQUENCE [LARGE SCALE GENOMIC DNA]</scope>
    <source>
        <strain>DSM 14603 / FGSC 9021 / UM521</strain>
    </source>
</reference>
<reference key="2">
    <citation type="submission" date="2014-09" db="EMBL/GenBank/DDBJ databases">
        <authorList>
            <person name="Gueldener U."/>
            <person name="Muensterkoetter M."/>
            <person name="Walter M.C."/>
            <person name="Mannhaupt G."/>
            <person name="Kahmann R."/>
        </authorList>
    </citation>
    <scope>GENOME REANNOTATION</scope>
    <source>
        <strain>DSM 14603 / FGSC 9021 / UM521</strain>
    </source>
</reference>
<reference key="3">
    <citation type="journal article" date="2005" name="Appl. Environ. Microbiol.">
        <title>Genetic analysis of biosurfactant production in Ustilago maydis.</title>
        <authorList>
            <person name="Hewald S."/>
            <person name="Josephs K."/>
            <person name="Boelker M."/>
        </authorList>
    </citation>
    <scope>FUNCTION</scope>
</reference>
<reference key="4">
    <citation type="journal article" date="2007" name="Mol. Microbiol.">
        <title>A biosynthetic gene cluster for a secreted cellobiose lipid with antifungal activity from Ustilago maydis.</title>
        <authorList>
            <person name="Teichmann B."/>
            <person name="Linne U."/>
            <person name="Hewald S."/>
            <person name="Marahiel M.A."/>
            <person name="Boelker M."/>
        </authorList>
    </citation>
    <scope>FUNCTION</scope>
    <scope>INDUCTION</scope>
    <scope>PATHWAY</scope>
</reference>
<reference key="5">
    <citation type="journal article" date="2010" name="Appl. Environ. Microbiol.">
        <title>Activation of the ustilagic acid biosynthesis gene cluster in Ustilago maydis by the C2H2 zinc finger transcription factor Rua1.</title>
        <authorList>
            <person name="Teichmann B."/>
            <person name="Liu L."/>
            <person name="Schink K.O."/>
            <person name="Boelker M."/>
        </authorList>
    </citation>
    <scope>INDUCTION</scope>
</reference>
<keyword id="KW-0521">NADP</keyword>
<keyword id="KW-0547">Nucleotide-binding</keyword>
<keyword id="KW-0560">Oxidoreductase</keyword>
<keyword id="KW-1185">Reference proteome</keyword>
<name>UHD1_MYCMD</name>
<organism>
    <name type="scientific">Mycosarcoma maydis</name>
    <name type="common">Corn smut fungus</name>
    <name type="synonym">Ustilago maydis</name>
    <dbReference type="NCBI Taxonomy" id="5270"/>
    <lineage>
        <taxon>Eukaryota</taxon>
        <taxon>Fungi</taxon>
        <taxon>Dikarya</taxon>
        <taxon>Basidiomycota</taxon>
        <taxon>Ustilaginomycotina</taxon>
        <taxon>Ustilaginomycetes</taxon>
        <taxon>Ustilaginales</taxon>
        <taxon>Ustilaginaceae</taxon>
        <taxon>Mycosarcoma</taxon>
    </lineage>
</organism>